<evidence type="ECO:0000255" key="1"/>
<evidence type="ECO:0000269" key="2">
    <source>
    </source>
</evidence>
<evidence type="ECO:0000269" key="3">
    <source>
    </source>
</evidence>
<evidence type="ECO:0000269" key="4">
    <source>
    </source>
</evidence>
<evidence type="ECO:0000303" key="5">
    <source>
    </source>
</evidence>
<evidence type="ECO:0000305" key="6"/>
<evidence type="ECO:0000312" key="7">
    <source>
        <dbReference type="HGNC" id="HGNC:26300"/>
    </source>
</evidence>
<organism>
    <name type="scientific">Homo sapiens</name>
    <name type="common">Human</name>
    <dbReference type="NCBI Taxonomy" id="9606"/>
    <lineage>
        <taxon>Eukaryota</taxon>
        <taxon>Metazoa</taxon>
        <taxon>Chordata</taxon>
        <taxon>Craniata</taxon>
        <taxon>Vertebrata</taxon>
        <taxon>Euteleostomi</taxon>
        <taxon>Mammalia</taxon>
        <taxon>Eutheria</taxon>
        <taxon>Euarchontoglires</taxon>
        <taxon>Primates</taxon>
        <taxon>Haplorrhini</taxon>
        <taxon>Catarrhini</taxon>
        <taxon>Hominidae</taxon>
        <taxon>Homo</taxon>
    </lineage>
</organism>
<accession>Q17RF5</accession>
<accession>B4DTI3</accession>
<accession>E7ETQ0</accession>
<accession>Q8TEC3</accession>
<reference key="1">
    <citation type="journal article" date="2004" name="Nat. Genet.">
        <title>Complete sequencing and characterization of 21,243 full-length human cDNAs.</title>
        <authorList>
            <person name="Ota T."/>
            <person name="Suzuki Y."/>
            <person name="Nishikawa T."/>
            <person name="Otsuki T."/>
            <person name="Sugiyama T."/>
            <person name="Irie R."/>
            <person name="Wakamatsu A."/>
            <person name="Hayashi K."/>
            <person name="Sato H."/>
            <person name="Nagai K."/>
            <person name="Kimura K."/>
            <person name="Makita H."/>
            <person name="Sekine M."/>
            <person name="Obayashi M."/>
            <person name="Nishi T."/>
            <person name="Shibahara T."/>
            <person name="Tanaka T."/>
            <person name="Ishii S."/>
            <person name="Yamamoto J."/>
            <person name="Saito K."/>
            <person name="Kawai Y."/>
            <person name="Isono Y."/>
            <person name="Nakamura Y."/>
            <person name="Nagahari K."/>
            <person name="Murakami K."/>
            <person name="Yasuda T."/>
            <person name="Iwayanagi T."/>
            <person name="Wagatsuma M."/>
            <person name="Shiratori A."/>
            <person name="Sudo H."/>
            <person name="Hosoiri T."/>
            <person name="Kaku Y."/>
            <person name="Kodaira H."/>
            <person name="Kondo H."/>
            <person name="Sugawara M."/>
            <person name="Takahashi M."/>
            <person name="Kanda K."/>
            <person name="Yokoi T."/>
            <person name="Furuya T."/>
            <person name="Kikkawa E."/>
            <person name="Omura Y."/>
            <person name="Abe K."/>
            <person name="Kamihara K."/>
            <person name="Katsuta N."/>
            <person name="Sato K."/>
            <person name="Tanikawa M."/>
            <person name="Yamazaki M."/>
            <person name="Ninomiya K."/>
            <person name="Ishibashi T."/>
            <person name="Yamashita H."/>
            <person name="Murakawa K."/>
            <person name="Fujimori K."/>
            <person name="Tanai H."/>
            <person name="Kimata M."/>
            <person name="Watanabe M."/>
            <person name="Hiraoka S."/>
            <person name="Chiba Y."/>
            <person name="Ishida S."/>
            <person name="Ono Y."/>
            <person name="Takiguchi S."/>
            <person name="Watanabe S."/>
            <person name="Yosida M."/>
            <person name="Hotuta T."/>
            <person name="Kusano J."/>
            <person name="Kanehori K."/>
            <person name="Takahashi-Fujii A."/>
            <person name="Hara H."/>
            <person name="Tanase T.-O."/>
            <person name="Nomura Y."/>
            <person name="Togiya S."/>
            <person name="Komai F."/>
            <person name="Hara R."/>
            <person name="Takeuchi K."/>
            <person name="Arita M."/>
            <person name="Imose N."/>
            <person name="Musashino K."/>
            <person name="Yuuki H."/>
            <person name="Oshima A."/>
            <person name="Sasaki N."/>
            <person name="Aotsuka S."/>
            <person name="Yoshikawa Y."/>
            <person name="Matsunawa H."/>
            <person name="Ichihara T."/>
            <person name="Shiohata N."/>
            <person name="Sano S."/>
            <person name="Moriya S."/>
            <person name="Momiyama H."/>
            <person name="Satoh N."/>
            <person name="Takami S."/>
            <person name="Terashima Y."/>
            <person name="Suzuki O."/>
            <person name="Nakagawa S."/>
            <person name="Senoh A."/>
            <person name="Mizoguchi H."/>
            <person name="Goto Y."/>
            <person name="Shimizu F."/>
            <person name="Wakebe H."/>
            <person name="Hishigaki H."/>
            <person name="Watanabe T."/>
            <person name="Sugiyama A."/>
            <person name="Takemoto M."/>
            <person name="Kawakami B."/>
            <person name="Yamazaki M."/>
            <person name="Watanabe K."/>
            <person name="Kumagai A."/>
            <person name="Itakura S."/>
            <person name="Fukuzumi Y."/>
            <person name="Fujimori Y."/>
            <person name="Komiyama M."/>
            <person name="Tashiro H."/>
            <person name="Tanigami A."/>
            <person name="Fujiwara T."/>
            <person name="Ono T."/>
            <person name="Yamada K."/>
            <person name="Fujii Y."/>
            <person name="Ozaki K."/>
            <person name="Hirao M."/>
            <person name="Ohmori Y."/>
            <person name="Kawabata A."/>
            <person name="Hikiji T."/>
            <person name="Kobatake N."/>
            <person name="Inagaki H."/>
            <person name="Ikema Y."/>
            <person name="Okamoto S."/>
            <person name="Okitani R."/>
            <person name="Kawakami T."/>
            <person name="Noguchi S."/>
            <person name="Itoh T."/>
            <person name="Shigeta K."/>
            <person name="Senba T."/>
            <person name="Matsumura K."/>
            <person name="Nakajima Y."/>
            <person name="Mizuno T."/>
            <person name="Morinaga M."/>
            <person name="Sasaki M."/>
            <person name="Togashi T."/>
            <person name="Oyama M."/>
            <person name="Hata H."/>
            <person name="Watanabe M."/>
            <person name="Komatsu T."/>
            <person name="Mizushima-Sugano J."/>
            <person name="Satoh T."/>
            <person name="Shirai Y."/>
            <person name="Takahashi Y."/>
            <person name="Nakagawa K."/>
            <person name="Okumura K."/>
            <person name="Nagase T."/>
            <person name="Nomura N."/>
            <person name="Kikuchi H."/>
            <person name="Masuho Y."/>
            <person name="Yamashita R."/>
            <person name="Nakai K."/>
            <person name="Yada T."/>
            <person name="Nakamura Y."/>
            <person name="Ohara O."/>
            <person name="Isogai T."/>
            <person name="Sugano S."/>
        </authorList>
    </citation>
    <scope>NUCLEOTIDE SEQUENCE [LARGE SCALE MRNA] (ISOFORMS 1 AND 2)</scope>
    <scope>VARIANT LEU-30</scope>
    <source>
        <tissue>Colon mucosa</tissue>
        <tissue>Placenta</tissue>
    </source>
</reference>
<reference key="2">
    <citation type="journal article" date="2005" name="Nature">
        <title>Generation and annotation of the DNA sequences of human chromosomes 2 and 4.</title>
        <authorList>
            <person name="Hillier L.W."/>
            <person name="Graves T.A."/>
            <person name="Fulton R.S."/>
            <person name="Fulton L.A."/>
            <person name="Pepin K.H."/>
            <person name="Minx P."/>
            <person name="Wagner-McPherson C."/>
            <person name="Layman D."/>
            <person name="Wylie K."/>
            <person name="Sekhon M."/>
            <person name="Becker M.C."/>
            <person name="Fewell G.A."/>
            <person name="Delehaunty K.D."/>
            <person name="Miner T.L."/>
            <person name="Nash W.E."/>
            <person name="Kremitzki C."/>
            <person name="Oddy L."/>
            <person name="Du H."/>
            <person name="Sun H."/>
            <person name="Bradshaw-Cordum H."/>
            <person name="Ali J."/>
            <person name="Carter J."/>
            <person name="Cordes M."/>
            <person name="Harris A."/>
            <person name="Isak A."/>
            <person name="van Brunt A."/>
            <person name="Nguyen C."/>
            <person name="Du F."/>
            <person name="Courtney L."/>
            <person name="Kalicki J."/>
            <person name="Ozersky P."/>
            <person name="Abbott S."/>
            <person name="Armstrong J."/>
            <person name="Belter E.A."/>
            <person name="Caruso L."/>
            <person name="Cedroni M."/>
            <person name="Cotton M."/>
            <person name="Davidson T."/>
            <person name="Desai A."/>
            <person name="Elliott G."/>
            <person name="Erb T."/>
            <person name="Fronick C."/>
            <person name="Gaige T."/>
            <person name="Haakenson W."/>
            <person name="Haglund K."/>
            <person name="Holmes A."/>
            <person name="Harkins R."/>
            <person name="Kim K."/>
            <person name="Kruchowski S.S."/>
            <person name="Strong C.M."/>
            <person name="Grewal N."/>
            <person name="Goyea E."/>
            <person name="Hou S."/>
            <person name="Levy A."/>
            <person name="Martinka S."/>
            <person name="Mead K."/>
            <person name="McLellan M.D."/>
            <person name="Meyer R."/>
            <person name="Randall-Maher J."/>
            <person name="Tomlinson C."/>
            <person name="Dauphin-Kohlberg S."/>
            <person name="Kozlowicz-Reilly A."/>
            <person name="Shah N."/>
            <person name="Swearengen-Shahid S."/>
            <person name="Snider J."/>
            <person name="Strong J.T."/>
            <person name="Thompson J."/>
            <person name="Yoakum M."/>
            <person name="Leonard S."/>
            <person name="Pearman C."/>
            <person name="Trani L."/>
            <person name="Radionenko M."/>
            <person name="Waligorski J.E."/>
            <person name="Wang C."/>
            <person name="Rock S.M."/>
            <person name="Tin-Wollam A.-M."/>
            <person name="Maupin R."/>
            <person name="Latreille P."/>
            <person name="Wendl M.C."/>
            <person name="Yang S.-P."/>
            <person name="Pohl C."/>
            <person name="Wallis J.W."/>
            <person name="Spieth J."/>
            <person name="Bieri T.A."/>
            <person name="Berkowicz N."/>
            <person name="Nelson J.O."/>
            <person name="Osborne J."/>
            <person name="Ding L."/>
            <person name="Meyer R."/>
            <person name="Sabo A."/>
            <person name="Shotland Y."/>
            <person name="Sinha P."/>
            <person name="Wohldmann P.E."/>
            <person name="Cook L.L."/>
            <person name="Hickenbotham M.T."/>
            <person name="Eldred J."/>
            <person name="Williams D."/>
            <person name="Jones T.A."/>
            <person name="She X."/>
            <person name="Ciccarelli F.D."/>
            <person name="Izaurralde E."/>
            <person name="Taylor J."/>
            <person name="Schmutz J."/>
            <person name="Myers R.M."/>
            <person name="Cox D.R."/>
            <person name="Huang X."/>
            <person name="McPherson J.D."/>
            <person name="Mardis E.R."/>
            <person name="Clifton S.W."/>
            <person name="Warren W.C."/>
            <person name="Chinwalla A.T."/>
            <person name="Eddy S.R."/>
            <person name="Marra M.A."/>
            <person name="Ovcharenko I."/>
            <person name="Furey T.S."/>
            <person name="Miller W."/>
            <person name="Eichler E.E."/>
            <person name="Bork P."/>
            <person name="Suyama M."/>
            <person name="Torrents D."/>
            <person name="Waterston R.H."/>
            <person name="Wilson R.K."/>
        </authorList>
    </citation>
    <scope>NUCLEOTIDE SEQUENCE [LARGE SCALE GENOMIC DNA]</scope>
</reference>
<reference key="3">
    <citation type="submission" date="2005-07" db="EMBL/GenBank/DDBJ databases">
        <authorList>
            <person name="Mural R.J."/>
            <person name="Istrail S."/>
            <person name="Sutton G.G."/>
            <person name="Florea L."/>
            <person name="Halpern A.L."/>
            <person name="Mobarry C.M."/>
            <person name="Lippert R."/>
            <person name="Walenz B."/>
            <person name="Shatkay H."/>
            <person name="Dew I."/>
            <person name="Miller J.R."/>
            <person name="Flanigan M.J."/>
            <person name="Edwards N.J."/>
            <person name="Bolanos R."/>
            <person name="Fasulo D."/>
            <person name="Halldorsson B.V."/>
            <person name="Hannenhalli S."/>
            <person name="Turner R."/>
            <person name="Yooseph S."/>
            <person name="Lu F."/>
            <person name="Nusskern D.R."/>
            <person name="Shue B.C."/>
            <person name="Zheng X.H."/>
            <person name="Zhong F."/>
            <person name="Delcher A.L."/>
            <person name="Huson D.H."/>
            <person name="Kravitz S.A."/>
            <person name="Mouchard L."/>
            <person name="Reinert K."/>
            <person name="Remington K.A."/>
            <person name="Clark A.G."/>
            <person name="Waterman M.S."/>
            <person name="Eichler E.E."/>
            <person name="Adams M.D."/>
            <person name="Hunkapiller M.W."/>
            <person name="Myers E.W."/>
            <person name="Venter J.C."/>
        </authorList>
    </citation>
    <scope>NUCLEOTIDE SEQUENCE [LARGE SCALE GENOMIC DNA]</scope>
</reference>
<reference key="4">
    <citation type="journal article" date="2004" name="Genome Res.">
        <title>The status, quality, and expansion of the NIH full-length cDNA project: the Mammalian Gene Collection (MGC).</title>
        <authorList>
            <consortium name="The MGC Project Team"/>
        </authorList>
    </citation>
    <scope>NUCLEOTIDE SEQUENCE [LARGE SCALE MRNA] (ISOFORM 1)</scope>
    <source>
        <tissue>Testis</tissue>
    </source>
</reference>
<reference key="5">
    <citation type="journal article" date="2012" name="Am. J. Hum. Genet.">
        <title>Mutations in C4orf26, encoding a peptide with in vitro hydroxyapatite crystal nucleation and growth activity, cause amelogenesis imperfecta.</title>
        <authorList>
            <person name="Parry D.A."/>
            <person name="Brookes S.J."/>
            <person name="Logan C.V."/>
            <person name="Poulter J.A."/>
            <person name="El-Sayed W."/>
            <person name="Al-Bahlani S."/>
            <person name="Al Harasi S."/>
            <person name="Sayed J."/>
            <person name="Raif el M."/>
            <person name="Shore R.C."/>
            <person name="Dashash M."/>
            <person name="Barron M."/>
            <person name="Morgan J.E."/>
            <person name="Carr I.M."/>
            <person name="Taylor G.R."/>
            <person name="Johnson C.A."/>
            <person name="Aldred M.J."/>
            <person name="Dixon M.J."/>
            <person name="Wright J.T."/>
            <person name="Kirkham J."/>
            <person name="Inglehearn C.F."/>
            <person name="Mighell A.J."/>
        </authorList>
    </citation>
    <scope>INVOLVEMENT IN AI2A4</scope>
    <scope>FUNCTION</scope>
    <scope>TISSUE SPECIFICITY</scope>
</reference>
<reference key="6">
    <citation type="journal article" date="2016" name="J. Dent. Res.">
        <title>Amelogenesis Imperfecta: 1 family, 2 phenotypes, and 2 mutated Genes.</title>
        <authorList>
            <person name="Prasad M.K."/>
            <person name="Laouina S."/>
            <person name="El Alloussi M."/>
            <person name="Dollfus H."/>
            <person name="Bloch-Zupan A."/>
        </authorList>
    </citation>
    <scope>INVOLVEMENT IN AI2A4</scope>
</reference>
<protein>
    <recommendedName>
        <fullName evidence="7">Odontogenesis associated phosphoprotein</fullName>
    </recommendedName>
</protein>
<proteinExistence type="evidence at protein level"/>
<feature type="signal peptide" evidence="1">
    <location>
        <begin position="1"/>
        <end position="23"/>
    </location>
</feature>
<feature type="chain" id="PRO_0000301959" description="Odontogenesis associated phosphoprotein">
    <location>
        <begin position="24"/>
        <end position="130"/>
    </location>
</feature>
<feature type="splice variant" id="VSP_046356" description="In isoform 2." evidence="5">
    <original>GQEEVFTPPGDSQNNADATDCQIFTLTPPPAPRSPVTRAQPITKTPRCPFHFFPRRPRIHFRFPNRPFVPSRCNHRFPFQPFYWPHRYLTYRYFPRRRLQRGSSSEES</original>
    <variation>ALSTFYLQQHINLHMDKKRYLRLLEIHKIMRTLPTARSLHSPLHLPRGVRSQGPSPSQRHPGVPSIFFHEGPESILGFQTDLSSLQGVTTVFHSSHFIGHTVTLLIGISPEEDSREEAHLRKAEREEKPKHTEAKKSLSFRKKQQKDFCFIFRN</variation>
    <location>
        <begin position="23"/>
        <end position="130"/>
    </location>
</feature>
<feature type="sequence variant" id="VAR_034915" description="In dbSNP:rs2306175." evidence="2">
    <original>P</original>
    <variation>L</variation>
    <location>
        <position position="30"/>
    </location>
</feature>
<feature type="sequence variant" id="VAR_034916" description="In dbSNP:rs2306174.">
    <original>R</original>
    <variation>H</variation>
    <location>
        <position position="109"/>
    </location>
</feature>
<feature type="sequence conflict" description="In Ref. 1; BAG61995." evidence="6" ref="1">
    <original>L</original>
    <variation>F</variation>
    <location sequence="Q17RF5-2">
        <position position="45"/>
    </location>
</feature>
<comment type="function">
    <text evidence="3">May promote nucleation of hydroxyapatite.</text>
</comment>
<comment type="interaction">
    <interactant intactId="EBI-10239029">
        <id>Q17RF5</id>
    </interactant>
    <interactant intactId="EBI-11911016">
        <id>P80188</id>
        <label>LCN2</label>
    </interactant>
    <organismsDiffer>false</organismsDiffer>
    <experiments>3</experiments>
</comment>
<comment type="interaction">
    <interactant intactId="EBI-10239029">
        <id>Q17RF5</id>
    </interactant>
    <interactant intactId="EBI-724076">
        <id>Q99750</id>
        <label>MDFI</label>
    </interactant>
    <organismsDiffer>false</organismsDiffer>
    <experiments>6</experiments>
</comment>
<comment type="interaction">
    <interactant intactId="EBI-10239029">
        <id>Q17RF5</id>
    </interactant>
    <interactant intactId="EBI-947187">
        <id>Q9UHD9</id>
        <label>UBQLN2</label>
    </interactant>
    <organismsDiffer>false</organismsDiffer>
    <experiments>3</experiments>
</comment>
<comment type="subcellular location">
    <subcellularLocation>
        <location evidence="6">Secreted</location>
    </subcellularLocation>
</comment>
<comment type="alternative products">
    <event type="alternative splicing"/>
    <isoform>
        <id>Q17RF5-1</id>
        <name>1</name>
        <sequence type="displayed"/>
    </isoform>
    <isoform>
        <id>Q17RF5-2</id>
        <name>2</name>
        <sequence type="described" ref="VSP_046356"/>
    </isoform>
</comment>
<comment type="tissue specificity">
    <text evidence="3">Highly expressed in placenta.</text>
</comment>
<comment type="disease" evidence="3 4">
    <disease id="DI-03537">
        <name>Amelogenesis imperfecta, hypomaturation type, 2A4</name>
        <acronym>AI2A4</acronym>
        <description>A defect of enamel formation. The disorder involves both primary and secondary dentitions. The teeth have a shiny agar jelly appearance and the enamel is softer than normal. Brown pigment is present in middle layers of enamel.</description>
        <dbReference type="MIM" id="614832"/>
    </disease>
    <text>The disease is caused by variants affecting the gene represented in this entry.</text>
</comment>
<name>ODAPH_HUMAN</name>
<gene>
    <name evidence="7" type="primary">ODAPH</name>
    <name type="synonym">C4orf26</name>
</gene>
<keyword id="KW-0025">Alternative splicing</keyword>
<keyword id="KW-0986">Amelogenesis imperfecta</keyword>
<keyword id="KW-1185">Reference proteome</keyword>
<keyword id="KW-0964">Secreted</keyword>
<keyword id="KW-0732">Signal</keyword>
<sequence>MARRHCFSYWLLVCWLVVTVAEGQEEVFTPPGDSQNNADATDCQIFTLTPPPAPRSPVTRAQPITKTPRCPFHFFPRRPRIHFRFPNRPFVPSRCNHRFPFQPFYWPHRYLTYRYFPRRRLQRGSSSEES</sequence>
<dbReference type="EMBL" id="AK074237">
    <property type="protein sequence ID" value="BAB85027.1"/>
    <property type="molecule type" value="mRNA"/>
</dbReference>
<dbReference type="EMBL" id="AK172776">
    <property type="protein sequence ID" value="BAD18758.1"/>
    <property type="molecule type" value="mRNA"/>
</dbReference>
<dbReference type="EMBL" id="AK300227">
    <property type="protein sequence ID" value="BAG61995.1"/>
    <property type="molecule type" value="mRNA"/>
</dbReference>
<dbReference type="EMBL" id="AC096759">
    <property type="status" value="NOT_ANNOTATED_CDS"/>
    <property type="molecule type" value="Genomic_DNA"/>
</dbReference>
<dbReference type="EMBL" id="CH471057">
    <property type="protein sequence ID" value="EAX05738.1"/>
    <property type="molecule type" value="Genomic_DNA"/>
</dbReference>
<dbReference type="EMBL" id="BC117342">
    <property type="protein sequence ID" value="AAI17343.1"/>
    <property type="molecule type" value="mRNA"/>
</dbReference>
<dbReference type="CCDS" id="CCDS3569.1">
    <molecule id="Q17RF5-1"/>
</dbReference>
<dbReference type="CCDS" id="CCDS56334.1">
    <molecule id="Q17RF5-2"/>
</dbReference>
<dbReference type="RefSeq" id="NP_001193910.1">
    <molecule id="Q17RF5-2"/>
    <property type="nucleotide sequence ID" value="NM_001206981.2"/>
</dbReference>
<dbReference type="RefSeq" id="NP_001244001.1">
    <property type="nucleotide sequence ID" value="NM_001257072.1"/>
</dbReference>
<dbReference type="RefSeq" id="NP_848592.2">
    <molecule id="Q17RF5-1"/>
    <property type="nucleotide sequence ID" value="NM_178497.5"/>
</dbReference>
<dbReference type="RefSeq" id="XP_011529970.1">
    <property type="nucleotide sequence ID" value="XM_011531668.2"/>
</dbReference>
<dbReference type="SMR" id="Q17RF5"/>
<dbReference type="BioGRID" id="127467">
    <property type="interactions" value="56"/>
</dbReference>
<dbReference type="FunCoup" id="Q17RF5">
    <property type="interactions" value="36"/>
</dbReference>
<dbReference type="IntAct" id="Q17RF5">
    <property type="interactions" value="47"/>
</dbReference>
<dbReference type="STRING" id="9606.ENSP00000406925"/>
<dbReference type="iPTMnet" id="Q17RF5"/>
<dbReference type="PhosphoSitePlus" id="Q17RF5"/>
<dbReference type="BioMuta" id="ODAPH"/>
<dbReference type="MassIVE" id="Q17RF5"/>
<dbReference type="PaxDb" id="9606-ENSP00000406925"/>
<dbReference type="PeptideAtlas" id="Q17RF5"/>
<dbReference type="Antibodypedia" id="68337">
    <property type="antibodies" value="31 antibodies from 9 providers"/>
</dbReference>
<dbReference type="DNASU" id="152816"/>
<dbReference type="Ensembl" id="ENST00000311623.9">
    <molecule id="Q17RF5-1"/>
    <property type="protein sequence ID" value="ENSP00000311307.5"/>
    <property type="gene ID" value="ENSG00000174792.11"/>
</dbReference>
<dbReference type="Ensembl" id="ENST00000435974.2">
    <molecule id="Q17RF5-2"/>
    <property type="protein sequence ID" value="ENSP00000406925.2"/>
    <property type="gene ID" value="ENSG00000174792.11"/>
</dbReference>
<dbReference type="GeneID" id="152816"/>
<dbReference type="KEGG" id="hsa:152816"/>
<dbReference type="MANE-Select" id="ENST00000311623.9">
    <property type="protein sequence ID" value="ENSP00000311307.5"/>
    <property type="RefSeq nucleotide sequence ID" value="NM_178497.5"/>
    <property type="RefSeq protein sequence ID" value="NP_848592.2"/>
</dbReference>
<dbReference type="UCSC" id="uc003hip.3">
    <molecule id="Q17RF5-1"/>
    <property type="organism name" value="human"/>
</dbReference>
<dbReference type="AGR" id="HGNC:26300"/>
<dbReference type="CTD" id="152816"/>
<dbReference type="DisGeNET" id="152816"/>
<dbReference type="GeneCards" id="ODAPH"/>
<dbReference type="HGNC" id="HGNC:26300">
    <property type="gene designation" value="ODAPH"/>
</dbReference>
<dbReference type="HPA" id="ENSG00000174792">
    <property type="expression patterns" value="Tissue enriched (placenta)"/>
</dbReference>
<dbReference type="MalaCards" id="ODAPH"/>
<dbReference type="MIM" id="614829">
    <property type="type" value="gene"/>
</dbReference>
<dbReference type="MIM" id="614832">
    <property type="type" value="phenotype"/>
</dbReference>
<dbReference type="neXtProt" id="NX_Q17RF5"/>
<dbReference type="OpenTargets" id="ENSG00000174792"/>
<dbReference type="Orphanet" id="100033">
    <property type="disease" value="Hypomaturation amelogenesis imperfecta"/>
</dbReference>
<dbReference type="PharmGKB" id="PA145008917"/>
<dbReference type="VEuPathDB" id="HostDB:ENSG00000174792"/>
<dbReference type="eggNOG" id="ENOG502TDW0">
    <property type="taxonomic scope" value="Eukaryota"/>
</dbReference>
<dbReference type="GeneTree" id="ENSGT00390000005348"/>
<dbReference type="HOGENOM" id="CLU_157665_0_0_1"/>
<dbReference type="InParanoid" id="Q17RF5"/>
<dbReference type="OMA" id="FYWPHRR"/>
<dbReference type="OrthoDB" id="9476951at2759"/>
<dbReference type="PAN-GO" id="Q17RF5">
    <property type="GO annotations" value="1 GO annotation based on evolutionary models"/>
</dbReference>
<dbReference type="PhylomeDB" id="Q17RF5"/>
<dbReference type="PathwayCommons" id="Q17RF5"/>
<dbReference type="SignaLink" id="Q17RF5"/>
<dbReference type="BioGRID-ORCS" id="152816">
    <property type="hits" value="8 hits in 1121 CRISPR screens"/>
</dbReference>
<dbReference type="ChiTaRS" id="C4orf26">
    <property type="organism name" value="human"/>
</dbReference>
<dbReference type="GenomeRNAi" id="152816"/>
<dbReference type="Pharos" id="Q17RF5">
    <property type="development level" value="Tbio"/>
</dbReference>
<dbReference type="PRO" id="PR:Q17RF5"/>
<dbReference type="Proteomes" id="UP000005640">
    <property type="component" value="Chromosome 4"/>
</dbReference>
<dbReference type="RNAct" id="Q17RF5">
    <property type="molecule type" value="protein"/>
</dbReference>
<dbReference type="Bgee" id="ENSG00000174792">
    <property type="expression patterns" value="Expressed in male germ line stem cell (sensu Vertebrata) in testis and 101 other cell types or tissues"/>
</dbReference>
<dbReference type="ExpressionAtlas" id="Q17RF5">
    <property type="expression patterns" value="baseline and differential"/>
</dbReference>
<dbReference type="GO" id="GO:0005576">
    <property type="term" value="C:extracellular region"/>
    <property type="evidence" value="ECO:0007669"/>
    <property type="project" value="UniProtKB-SubCell"/>
</dbReference>
<dbReference type="GO" id="GO:0070169">
    <property type="term" value="P:positive regulation of biomineral tissue development"/>
    <property type="evidence" value="ECO:0000315"/>
    <property type="project" value="UniProtKB"/>
</dbReference>
<dbReference type="GO" id="GO:0070175">
    <property type="term" value="P:positive regulation of enamel mineralization"/>
    <property type="evidence" value="ECO:0000315"/>
    <property type="project" value="UniProtKB"/>
</dbReference>
<dbReference type="InterPro" id="IPR031706">
    <property type="entry name" value="ODAPH"/>
</dbReference>
<dbReference type="PANTHER" id="PTHR40376">
    <property type="entry name" value="ODONTOGENESIS ASSOCIATED PHOSPHOPROTEIN"/>
    <property type="match status" value="1"/>
</dbReference>
<dbReference type="PANTHER" id="PTHR40376:SF1">
    <property type="entry name" value="ODONTOGENESIS ASSOCIATED PHOSPHOPROTEIN"/>
    <property type="match status" value="1"/>
</dbReference>
<dbReference type="Pfam" id="PF15848">
    <property type="entry name" value="ODAPH"/>
    <property type="match status" value="1"/>
</dbReference>